<evidence type="ECO:0000255" key="1">
    <source>
        <dbReference type="HAMAP-Rule" id="MF_00439"/>
    </source>
</evidence>
<dbReference type="EMBL" id="DQ383816">
    <property type="protein sequence ID" value="ABD47234.1"/>
    <property type="molecule type" value="Genomic_DNA"/>
</dbReference>
<dbReference type="SMR" id="Q1KXM2"/>
<dbReference type="GO" id="GO:0009535">
    <property type="term" value="C:chloroplast thylakoid membrane"/>
    <property type="evidence" value="ECO:0007669"/>
    <property type="project" value="UniProtKB-SubCell"/>
</dbReference>
<dbReference type="GO" id="GO:0015979">
    <property type="term" value="P:photosynthesis"/>
    <property type="evidence" value="ECO:0007669"/>
    <property type="project" value="UniProtKB-UniRule"/>
</dbReference>
<dbReference type="FunFam" id="1.25.40.10:FF:000004">
    <property type="entry name" value="Photosystem I assembly protein Ycf3"/>
    <property type="match status" value="1"/>
</dbReference>
<dbReference type="Gene3D" id="1.25.40.10">
    <property type="entry name" value="Tetratricopeptide repeat domain"/>
    <property type="match status" value="1"/>
</dbReference>
<dbReference type="HAMAP" id="MF_00439">
    <property type="entry name" value="Ycf3"/>
    <property type="match status" value="1"/>
</dbReference>
<dbReference type="InterPro" id="IPR022818">
    <property type="entry name" value="PSI_Ycf3_assembly"/>
</dbReference>
<dbReference type="InterPro" id="IPR011990">
    <property type="entry name" value="TPR-like_helical_dom_sf"/>
</dbReference>
<dbReference type="InterPro" id="IPR019734">
    <property type="entry name" value="TPR_rpt"/>
</dbReference>
<dbReference type="InterPro" id="IPR051685">
    <property type="entry name" value="Ycf3/AcsC/BcsC/TPR_MFPF"/>
</dbReference>
<dbReference type="NCBIfam" id="NF002725">
    <property type="entry name" value="PRK02603.1"/>
    <property type="match status" value="1"/>
</dbReference>
<dbReference type="PANTHER" id="PTHR44943">
    <property type="entry name" value="CELLULOSE SYNTHASE OPERON PROTEIN C"/>
    <property type="match status" value="1"/>
</dbReference>
<dbReference type="PANTHER" id="PTHR44943:SF8">
    <property type="entry name" value="TPR REPEAT-CONTAINING PROTEIN MJ0263"/>
    <property type="match status" value="1"/>
</dbReference>
<dbReference type="Pfam" id="PF00515">
    <property type="entry name" value="TPR_1"/>
    <property type="match status" value="1"/>
</dbReference>
<dbReference type="SMART" id="SM00028">
    <property type="entry name" value="TPR"/>
    <property type="match status" value="3"/>
</dbReference>
<dbReference type="SUPFAM" id="SSF48452">
    <property type="entry name" value="TPR-like"/>
    <property type="match status" value="1"/>
</dbReference>
<dbReference type="PROSITE" id="PS50005">
    <property type="entry name" value="TPR"/>
    <property type="match status" value="3"/>
</dbReference>
<dbReference type="PROSITE" id="PS50293">
    <property type="entry name" value="TPR_REGION"/>
    <property type="match status" value="2"/>
</dbReference>
<accession>Q1KXM2</accession>
<protein>
    <recommendedName>
        <fullName evidence="1">Photosystem I assembly protein Ycf3</fullName>
    </recommendedName>
</protein>
<organism>
    <name type="scientific">Lactuca sativa</name>
    <name type="common">Garden lettuce</name>
    <dbReference type="NCBI Taxonomy" id="4236"/>
    <lineage>
        <taxon>Eukaryota</taxon>
        <taxon>Viridiplantae</taxon>
        <taxon>Streptophyta</taxon>
        <taxon>Embryophyta</taxon>
        <taxon>Tracheophyta</taxon>
        <taxon>Spermatophyta</taxon>
        <taxon>Magnoliopsida</taxon>
        <taxon>eudicotyledons</taxon>
        <taxon>Gunneridae</taxon>
        <taxon>Pentapetalae</taxon>
        <taxon>asterids</taxon>
        <taxon>campanulids</taxon>
        <taxon>Asterales</taxon>
        <taxon>Asteraceae</taxon>
        <taxon>Cichorioideae</taxon>
        <taxon>Cichorieae</taxon>
        <taxon>Lactucinae</taxon>
        <taxon>Lactuca</taxon>
    </lineage>
</organism>
<reference key="1">
    <citation type="submission" date="2006-01" db="EMBL/GenBank/DDBJ databases">
        <title>A comparison of the first two published chloroplast genomes in Asteraceae: Lactuca and Helianthus.</title>
        <authorList>
            <person name="Timme R.E."/>
            <person name="Kuehl J.V."/>
            <person name="Boore J.L."/>
            <person name="Jansen R.K."/>
        </authorList>
    </citation>
    <scope>NUCLEOTIDE SEQUENCE [LARGE SCALE GENOMIC DNA]</scope>
    <source>
        <strain>cv. Salinas</strain>
    </source>
</reference>
<gene>
    <name evidence="1" type="primary">ycf3</name>
</gene>
<sequence length="168" mass="19595">MPRSRINGNFIDKTFSIVANILLRIIPTTSGEKEAFTYYRDGMSAQSEGNYAEALQNYYEAMRLEIDPYDRSYILYNIGLIHTSNGEHTKALEYYFRALERNPFLPQAFNNMAVICHYRGEQAIRQGDSEIAEAWFDQAAEYWKQAIALTPGNYIEAHNWLKITRRFE</sequence>
<proteinExistence type="inferred from homology"/>
<feature type="chain" id="PRO_0000275623" description="Photosystem I assembly protein Ycf3">
    <location>
        <begin position="1"/>
        <end position="168"/>
    </location>
</feature>
<feature type="repeat" description="TPR 1">
    <location>
        <begin position="35"/>
        <end position="68"/>
    </location>
</feature>
<feature type="repeat" description="TPR 2">
    <location>
        <begin position="72"/>
        <end position="105"/>
    </location>
</feature>
<feature type="repeat" description="TPR 3">
    <location>
        <begin position="120"/>
        <end position="153"/>
    </location>
</feature>
<keyword id="KW-0150">Chloroplast</keyword>
<keyword id="KW-0472">Membrane</keyword>
<keyword id="KW-0602">Photosynthesis</keyword>
<keyword id="KW-0934">Plastid</keyword>
<keyword id="KW-0677">Repeat</keyword>
<keyword id="KW-0793">Thylakoid</keyword>
<keyword id="KW-0802">TPR repeat</keyword>
<geneLocation type="chloroplast"/>
<comment type="function">
    <text evidence="1">Essential for the assembly of the photosystem I (PSI) complex. May act as a chaperone-like factor to guide the assembly of the PSI subunits.</text>
</comment>
<comment type="subcellular location">
    <subcellularLocation>
        <location evidence="1">Plastid</location>
        <location evidence="1">Chloroplast thylakoid membrane</location>
        <topology evidence="1">Peripheral membrane protein</topology>
    </subcellularLocation>
</comment>
<comment type="similarity">
    <text evidence="1">Belongs to the Ycf3 family.</text>
</comment>
<name>YCF3_LACSA</name>